<gene>
    <name evidence="1" type="primary">ravA</name>
    <name type="ordered locus">PC1_4243</name>
</gene>
<feature type="chain" id="PRO_1000215744" description="Regulatory ATPase RavA">
    <location>
        <begin position="1"/>
        <end position="499"/>
    </location>
</feature>
<feature type="binding site" evidence="1">
    <location>
        <position position="23"/>
    </location>
    <ligand>
        <name>ADP</name>
        <dbReference type="ChEBI" id="CHEBI:456216"/>
    </ligand>
</feature>
<feature type="binding site" evidence="1">
    <location>
        <position position="49"/>
    </location>
    <ligand>
        <name>ADP</name>
        <dbReference type="ChEBI" id="CHEBI:456216"/>
    </ligand>
</feature>
<feature type="binding site" evidence="1">
    <location>
        <position position="50"/>
    </location>
    <ligand>
        <name>ADP</name>
        <dbReference type="ChEBI" id="CHEBI:456216"/>
    </ligand>
</feature>
<feature type="binding site" evidence="1">
    <location>
        <position position="51"/>
    </location>
    <ligand>
        <name>ADP</name>
        <dbReference type="ChEBI" id="CHEBI:456216"/>
    </ligand>
</feature>
<feature type="binding site" evidence="1">
    <location>
        <position position="52"/>
    </location>
    <ligand>
        <name>ADP</name>
        <dbReference type="ChEBI" id="CHEBI:456216"/>
    </ligand>
</feature>
<feature type="binding site" evidence="1">
    <location>
        <position position="53"/>
    </location>
    <ligand>
        <name>ADP</name>
        <dbReference type="ChEBI" id="CHEBI:456216"/>
    </ligand>
</feature>
<feature type="binding site" evidence="1">
    <location>
        <position position="54"/>
    </location>
    <ligand>
        <name>ADP</name>
        <dbReference type="ChEBI" id="CHEBI:456216"/>
    </ligand>
</feature>
<feature type="binding site" evidence="1">
    <location>
        <position position="196"/>
    </location>
    <ligand>
        <name>ADP</name>
        <dbReference type="ChEBI" id="CHEBI:456216"/>
    </ligand>
</feature>
<sequence>MRQTAALAERISRLSHALEHGLYERQHAIRLCLLAALSGESVFLLGPPGIAKSMIARRLKFAFRHANAFEYLMTRFSTPEEVFGPLSIQALKDEGRYQRLTAGYLPEAEIVFLDEIWKAGPAILNTLLTAINERRFRNGNSEDTIPMRLLVAASNELPEADGGLEALYDRMLIRLWLDRVQEKQNFRALLVNNSSERDNPVPPALSVSDEEYQQWQKDIEHIALPEAGFELIYTLRQQLDALEQAPYISDRRWKKALRLLQASAFFCGRDTITPVDIILLKDCLWHDQSTLTLIEHQLELLITEHAYQQKSLLFRLQQVNTKRQQYQREQSELQAFSVEKQGHFLGRKFHYALPDTIDTETLELVLQRPLILHDIEVNHLIIDKNALQGWLQKGGEIRGKLNGIGFTQRLDLLVDDRQHLAIRDISLQSSILSLPEKRDIALPAEITDEYEKLNMQLREQRRLFSQHQPCLFVPSEWLAKIEASLQQVAEQIQQSEQQD</sequence>
<keyword id="KW-0067">ATP-binding</keyword>
<keyword id="KW-0143">Chaperone</keyword>
<keyword id="KW-0963">Cytoplasm</keyword>
<keyword id="KW-0378">Hydrolase</keyword>
<keyword id="KW-0547">Nucleotide-binding</keyword>
<accession>C6DJF8</accession>
<organism>
    <name type="scientific">Pectobacterium carotovorum subsp. carotovorum (strain PC1)</name>
    <dbReference type="NCBI Taxonomy" id="561230"/>
    <lineage>
        <taxon>Bacteria</taxon>
        <taxon>Pseudomonadati</taxon>
        <taxon>Pseudomonadota</taxon>
        <taxon>Gammaproteobacteria</taxon>
        <taxon>Enterobacterales</taxon>
        <taxon>Pectobacteriaceae</taxon>
        <taxon>Pectobacterium</taxon>
    </lineage>
</organism>
<dbReference type="EC" id="3.6.1.-" evidence="1"/>
<dbReference type="EMBL" id="CP001657">
    <property type="protein sequence ID" value="ACT15257.1"/>
    <property type="molecule type" value="Genomic_DNA"/>
</dbReference>
<dbReference type="RefSeq" id="WP_015842322.1">
    <property type="nucleotide sequence ID" value="NC_012917.1"/>
</dbReference>
<dbReference type="SMR" id="C6DJF8"/>
<dbReference type="STRING" id="561230.PC1_4243"/>
<dbReference type="KEGG" id="pct:PC1_4243"/>
<dbReference type="eggNOG" id="COG0714">
    <property type="taxonomic scope" value="Bacteria"/>
</dbReference>
<dbReference type="HOGENOM" id="CLU_018678_1_0_6"/>
<dbReference type="OrthoDB" id="1814213at2"/>
<dbReference type="Proteomes" id="UP000002736">
    <property type="component" value="Chromosome"/>
</dbReference>
<dbReference type="GO" id="GO:0005737">
    <property type="term" value="C:cytoplasm"/>
    <property type="evidence" value="ECO:0007669"/>
    <property type="project" value="UniProtKB-SubCell"/>
</dbReference>
<dbReference type="GO" id="GO:0005524">
    <property type="term" value="F:ATP binding"/>
    <property type="evidence" value="ECO:0007669"/>
    <property type="project" value="UniProtKB-KW"/>
</dbReference>
<dbReference type="GO" id="GO:0016887">
    <property type="term" value="F:ATP hydrolysis activity"/>
    <property type="evidence" value="ECO:0007669"/>
    <property type="project" value="UniProtKB-UniRule"/>
</dbReference>
<dbReference type="CDD" id="cd00009">
    <property type="entry name" value="AAA"/>
    <property type="match status" value="1"/>
</dbReference>
<dbReference type="Gene3D" id="1.20.58.1510">
    <property type="match status" value="1"/>
</dbReference>
<dbReference type="Gene3D" id="2.40.128.430">
    <property type="match status" value="1"/>
</dbReference>
<dbReference type="Gene3D" id="3.40.50.300">
    <property type="entry name" value="P-loop containing nucleotide triphosphate hydrolases"/>
    <property type="match status" value="1"/>
</dbReference>
<dbReference type="HAMAP" id="MF_01625">
    <property type="entry name" value="ATPase_RavA"/>
    <property type="match status" value="1"/>
</dbReference>
<dbReference type="InterPro" id="IPR003593">
    <property type="entry name" value="AAA+_ATPase"/>
</dbReference>
<dbReference type="InterPro" id="IPR023671">
    <property type="entry name" value="ATPase_RavA"/>
</dbReference>
<dbReference type="InterPro" id="IPR022547">
    <property type="entry name" value="ATPase_RavA_C"/>
</dbReference>
<dbReference type="InterPro" id="IPR045427">
    <property type="entry name" value="MoxR"/>
</dbReference>
<dbReference type="InterPro" id="IPR027417">
    <property type="entry name" value="P-loop_NTPase"/>
</dbReference>
<dbReference type="InterPro" id="IPR041538">
    <property type="entry name" value="RavA-like_AAA_lid"/>
</dbReference>
<dbReference type="InterPro" id="IPR050513">
    <property type="entry name" value="RavA_ATPases"/>
</dbReference>
<dbReference type="InterPro" id="IPR046898">
    <property type="entry name" value="RavA_LARA_dom"/>
</dbReference>
<dbReference type="InterPro" id="IPR046932">
    <property type="entry name" value="RavA_LARA_sf"/>
</dbReference>
<dbReference type="NCBIfam" id="NF010054">
    <property type="entry name" value="PRK13531.1"/>
    <property type="match status" value="1"/>
</dbReference>
<dbReference type="PANTHER" id="PTHR32204">
    <property type="entry name" value="ATPASE RAVA"/>
    <property type="match status" value="1"/>
</dbReference>
<dbReference type="PANTHER" id="PTHR32204:SF0">
    <property type="entry name" value="ATPASE RAVA"/>
    <property type="match status" value="1"/>
</dbReference>
<dbReference type="Pfam" id="PF17868">
    <property type="entry name" value="AAA_lid_8"/>
    <property type="match status" value="1"/>
</dbReference>
<dbReference type="Pfam" id="PF12592">
    <property type="entry name" value="ATPase_RavA_C"/>
    <property type="match status" value="1"/>
</dbReference>
<dbReference type="Pfam" id="PF20030">
    <property type="entry name" value="bpMoxR"/>
    <property type="match status" value="1"/>
</dbReference>
<dbReference type="Pfam" id="PF20265">
    <property type="entry name" value="LARA_dom"/>
    <property type="match status" value="1"/>
</dbReference>
<dbReference type="SMART" id="SM00382">
    <property type="entry name" value="AAA"/>
    <property type="match status" value="1"/>
</dbReference>
<dbReference type="SUPFAM" id="SSF52540">
    <property type="entry name" value="P-loop containing nucleoside triphosphate hydrolases"/>
    <property type="match status" value="1"/>
</dbReference>
<proteinExistence type="inferred from homology"/>
<name>RAVA_PECCP</name>
<reference key="1">
    <citation type="submission" date="2009-07" db="EMBL/GenBank/DDBJ databases">
        <title>Complete sequence of Pectobacterium carotovorum subsp. carotovorum PC1.</title>
        <authorList>
            <consortium name="US DOE Joint Genome Institute"/>
            <person name="Lucas S."/>
            <person name="Copeland A."/>
            <person name="Lapidus A."/>
            <person name="Glavina del Rio T."/>
            <person name="Tice H."/>
            <person name="Bruce D."/>
            <person name="Goodwin L."/>
            <person name="Pitluck S."/>
            <person name="Munk A.C."/>
            <person name="Brettin T."/>
            <person name="Detter J.C."/>
            <person name="Han C."/>
            <person name="Tapia R."/>
            <person name="Larimer F."/>
            <person name="Land M."/>
            <person name="Hauser L."/>
            <person name="Kyrpides N."/>
            <person name="Mikhailova N."/>
            <person name="Balakrishnan V."/>
            <person name="Glasner J."/>
            <person name="Perna N.T."/>
        </authorList>
    </citation>
    <scope>NUCLEOTIDE SEQUENCE [LARGE SCALE GENOMIC DNA]</scope>
    <source>
        <strain>PC1</strain>
    </source>
</reference>
<comment type="function">
    <text evidence="1">Component of the RavA-ViaA chaperone complex, which may act on the membrane to optimize the function of some of the respiratory chains. RavA functions as an ATPase.</text>
</comment>
<comment type="catalytic activity">
    <reaction evidence="1">
        <text>ATP + H2O = ADP + phosphate + H(+)</text>
        <dbReference type="Rhea" id="RHEA:13065"/>
        <dbReference type="ChEBI" id="CHEBI:15377"/>
        <dbReference type="ChEBI" id="CHEBI:15378"/>
        <dbReference type="ChEBI" id="CHEBI:30616"/>
        <dbReference type="ChEBI" id="CHEBI:43474"/>
        <dbReference type="ChEBI" id="CHEBI:456216"/>
    </reaction>
</comment>
<comment type="activity regulation">
    <text evidence="1">ATPase activity is stimulated by ViaA.</text>
</comment>
<comment type="subunit">
    <text evidence="1">Homohexamer. Interacts with ViaA.</text>
</comment>
<comment type="subcellular location">
    <subcellularLocation>
        <location evidence="1">Cytoplasm</location>
    </subcellularLocation>
</comment>
<comment type="similarity">
    <text evidence="1">Belongs to the RavA family.</text>
</comment>
<evidence type="ECO:0000255" key="1">
    <source>
        <dbReference type="HAMAP-Rule" id="MF_01625"/>
    </source>
</evidence>
<protein>
    <recommendedName>
        <fullName evidence="1">Regulatory ATPase RavA</fullName>
        <ecNumber evidence="1">3.6.1.-</ecNumber>
    </recommendedName>
    <alternativeName>
        <fullName evidence="1">Regulatory ATPase variant A</fullName>
    </alternativeName>
</protein>